<proteinExistence type="evidence at transcript level"/>
<protein>
    <recommendedName>
        <fullName evidence="1">Epithelial sodium channel subunit delta</fullName>
    </recommendedName>
    <alternativeName>
        <fullName evidence="1">Amiloride-sensitive sodium channel subunit delta</fullName>
    </alternativeName>
</protein>
<name>SCNND_PANTR</name>
<organism>
    <name type="scientific">Pan troglodytes</name>
    <name type="common">Chimpanzee</name>
    <dbReference type="NCBI Taxonomy" id="9598"/>
    <lineage>
        <taxon>Eukaryota</taxon>
        <taxon>Metazoa</taxon>
        <taxon>Chordata</taxon>
        <taxon>Craniata</taxon>
        <taxon>Vertebrata</taxon>
        <taxon>Euteleostomi</taxon>
        <taxon>Mammalia</taxon>
        <taxon>Eutheria</taxon>
        <taxon>Euarchontoglires</taxon>
        <taxon>Primates</taxon>
        <taxon>Haplorrhini</taxon>
        <taxon>Catarrhini</taxon>
        <taxon>Hominidae</taxon>
        <taxon>Pan</taxon>
    </lineage>
</organism>
<dbReference type="EMBL" id="AF038165">
    <property type="protein sequence ID" value="AAB92659.1"/>
    <property type="molecule type" value="mRNA"/>
</dbReference>
<dbReference type="RefSeq" id="NP_001009072.1">
    <property type="nucleotide sequence ID" value="NM_001009072.1"/>
</dbReference>
<dbReference type="SMR" id="O46547"/>
<dbReference type="STRING" id="9598.ENSPTRP00000054494"/>
<dbReference type="GlyCosmos" id="O46547">
    <property type="glycosylation" value="2 sites, No reported glycans"/>
</dbReference>
<dbReference type="PaxDb" id="9598-ENSPTRP00000054494"/>
<dbReference type="GeneID" id="450189"/>
<dbReference type="CTD" id="6339"/>
<dbReference type="eggNOG" id="KOG4294">
    <property type="taxonomic scope" value="Eukaryota"/>
</dbReference>
<dbReference type="InParanoid" id="O46547"/>
<dbReference type="Proteomes" id="UP000002277">
    <property type="component" value="Unplaced"/>
</dbReference>
<dbReference type="GO" id="GO:0016324">
    <property type="term" value="C:apical plasma membrane"/>
    <property type="evidence" value="ECO:0007669"/>
    <property type="project" value="UniProtKB-SubCell"/>
</dbReference>
<dbReference type="GO" id="GO:0005886">
    <property type="term" value="C:plasma membrane"/>
    <property type="evidence" value="ECO:0000250"/>
    <property type="project" value="UniProtKB"/>
</dbReference>
<dbReference type="GO" id="GO:0034706">
    <property type="term" value="C:sodium channel complex"/>
    <property type="evidence" value="ECO:0000250"/>
    <property type="project" value="UniProtKB"/>
</dbReference>
<dbReference type="GO" id="GO:0015280">
    <property type="term" value="F:ligand-gated sodium channel activity"/>
    <property type="evidence" value="ECO:0000318"/>
    <property type="project" value="GO_Central"/>
</dbReference>
<dbReference type="GO" id="GO:0005272">
    <property type="term" value="F:sodium channel activity"/>
    <property type="evidence" value="ECO:0000250"/>
    <property type="project" value="UniProtKB"/>
</dbReference>
<dbReference type="GO" id="GO:0035725">
    <property type="term" value="P:sodium ion transmembrane transport"/>
    <property type="evidence" value="ECO:0000318"/>
    <property type="project" value="GO_Central"/>
</dbReference>
<dbReference type="FunFam" id="2.60.470.10:FF:000007">
    <property type="entry name" value="Sodium channel epithelial 1 delta subunit"/>
    <property type="match status" value="1"/>
</dbReference>
<dbReference type="Gene3D" id="2.60.470.10">
    <property type="entry name" value="Acid-sensing ion channels like domains"/>
    <property type="match status" value="1"/>
</dbReference>
<dbReference type="Gene3D" id="1.10.287.770">
    <property type="entry name" value="YojJ-like"/>
    <property type="match status" value="1"/>
</dbReference>
<dbReference type="InterPro" id="IPR001873">
    <property type="entry name" value="ENaC"/>
</dbReference>
<dbReference type="InterPro" id="IPR004724">
    <property type="entry name" value="ENaC_chordates"/>
</dbReference>
<dbReference type="InterPro" id="IPR020903">
    <property type="entry name" value="ENaC_CS"/>
</dbReference>
<dbReference type="NCBIfam" id="TIGR00859">
    <property type="entry name" value="ENaC"/>
    <property type="match status" value="1"/>
</dbReference>
<dbReference type="PANTHER" id="PTHR11690:SF132">
    <property type="entry name" value="AMILORIDE-SENSITIVE SODIUM CHANNEL SUBUNIT DELTA"/>
    <property type="match status" value="1"/>
</dbReference>
<dbReference type="PANTHER" id="PTHR11690">
    <property type="entry name" value="AMILORIDE-SENSITIVE SODIUM CHANNEL-RELATED"/>
    <property type="match status" value="1"/>
</dbReference>
<dbReference type="Pfam" id="PF00858">
    <property type="entry name" value="ASC"/>
    <property type="match status" value="1"/>
</dbReference>
<dbReference type="PRINTS" id="PR01078">
    <property type="entry name" value="AMINACHANNEL"/>
</dbReference>
<dbReference type="PROSITE" id="PS01206">
    <property type="entry name" value="ASC"/>
    <property type="match status" value="1"/>
</dbReference>
<gene>
    <name evidence="1" type="primary">SCNN1D</name>
</gene>
<evidence type="ECO:0000250" key="1">
    <source>
        <dbReference type="UniProtKB" id="P51172"/>
    </source>
</evidence>
<evidence type="ECO:0000255" key="2"/>
<evidence type="ECO:0000256" key="3">
    <source>
        <dbReference type="SAM" id="MobiDB-lite"/>
    </source>
</evidence>
<evidence type="ECO:0000305" key="4"/>
<sequence length="638" mass="70188">MAEHRSMDGRMEAATRGGSHLQAAAQTPPRPGPPSAPPPPPKEGHQEGLVELPASFRELLTFFCTNATIHGAIRLVCSRGNRLKTTSWGLLSLGALVALCWQLGLLFERHWHRPVLMAVSVHSERKLLPLVTLCDGNPRRPSPVLRHLELLDEFARENIDSLYNVNLSQGRAALSAPVPRHEPPFHLDREIRLQRLSHSGSRVRVGFRLCNSTGGDCFYRGYTSGVAAVQDWCHFHYVDILALLPAAWEDSHGSQDGHFVLSCSYDGLDCQARQFRTFHHPTYGSCYTVDGVWTAQRPGITHGVGLVLRVEQQPHLPLLSTLAGIRVMVHGRNHTPFLGHHSFSVRPGTEATISIREDEVHRLGSPYGHCTAGAEGVEVELLHNTSYTRQACLVSCFQQLMVETCSCGYYLHPLPAGAEYCSSARHPAWGHCFYRLYQDLETHRLPCTSRCPRPCRESAFKLSTGTSRWPSAKSAGWTLATLGEQGLPRQSHRQRSSLAKINIVYQELNYRSVEEAPVYSVPQLLSAMGSLCSLWFGASVLSLLELLELLLDASALTLVLGGRRLRRAWFSWPRASPASGASSIKPEASQMPTPAGGTSDDPEPSGPHLPRVMLPGVLAGVSAEESWAGPQPLETLDT</sequence>
<reference key="1">
    <citation type="submission" date="1997-12" db="EMBL/GenBank/DDBJ databases">
        <authorList>
            <person name="Al-Khalili O.K."/>
            <person name="Eaton D.C."/>
        </authorList>
    </citation>
    <scope>NUCLEOTIDE SEQUENCE [MRNA]</scope>
    <source>
        <tissue>Testis</tissue>
    </source>
</reference>
<comment type="function">
    <text evidence="1">Potential alternative pore-forming subunit of the epithelial sodium channel (ENaC), capable of replacing the alpha/SCNN1A subunit, creating a more active channel with distinct properties. ENaC functions in epithelial tissues, where it facilitates the electrodiffusion of sodium ions from the extracellular fluid through the apical membrane of cells, with water following osmotically, regulating sodium balance and fluid homeostasis. This subunit could also function independently as a sodium channel or assemble into other tissue-specific heterotrimeric sodium channels.</text>
</comment>
<comment type="catalytic activity">
    <reaction evidence="1">
        <text>Na(+)(in) = Na(+)(out)</text>
        <dbReference type="Rhea" id="RHEA:34963"/>
        <dbReference type="ChEBI" id="CHEBI:29101"/>
    </reaction>
</comment>
<comment type="activity regulation">
    <text evidence="1">Originally identified and characterized by its inhibition by the diuretic drug amiloride.</text>
</comment>
<comment type="subunit">
    <text evidence="1">Can form an alternative heterotrimeric epithelial sodium channel (ENaC), composed of a delta (SCNN1D), beta (SCNN1B), and gamma (SCNN1G) subunit, where the delta (SCNN1D) subunit replaces the alpha (SCNN1A) subunit.</text>
</comment>
<comment type="subcellular location">
    <subcellularLocation>
        <location evidence="1">Apical cell membrane</location>
        <topology evidence="1">Multi-pass membrane protein</topology>
    </subcellularLocation>
</comment>
<comment type="miscellaneous">
    <text evidence="1">The additional delta/SCNN1D subunit exists only in some organisms.</text>
</comment>
<comment type="similarity">
    <text evidence="4">Belongs to the amiloride-sensitive sodium channel (TC 1.A.6) family. SCNN1D subfamily.</text>
</comment>
<keyword id="KW-1003">Cell membrane</keyword>
<keyword id="KW-0325">Glycoprotein</keyword>
<keyword id="KW-0407">Ion channel</keyword>
<keyword id="KW-0406">Ion transport</keyword>
<keyword id="KW-0472">Membrane</keyword>
<keyword id="KW-1185">Reference proteome</keyword>
<keyword id="KW-0915">Sodium</keyword>
<keyword id="KW-0894">Sodium channel</keyword>
<keyword id="KW-0739">Sodium transport</keyword>
<keyword id="KW-0812">Transmembrane</keyword>
<keyword id="KW-1133">Transmembrane helix</keyword>
<keyword id="KW-0813">Transport</keyword>
<feature type="chain" id="PRO_0000181283" description="Epithelial sodium channel subunit delta">
    <location>
        <begin position="1"/>
        <end position="638"/>
    </location>
</feature>
<feature type="topological domain" description="Cytoplasmic" evidence="1">
    <location>
        <begin position="1"/>
        <end position="86"/>
    </location>
</feature>
<feature type="transmembrane region" description="Helical; Name=1" evidence="2">
    <location>
        <begin position="87"/>
        <end position="107"/>
    </location>
</feature>
<feature type="topological domain" description="Extracellular" evidence="1">
    <location>
        <begin position="108"/>
        <end position="530"/>
    </location>
</feature>
<feature type="transmembrane region" description="Helical; Name=2" evidence="2">
    <location>
        <begin position="531"/>
        <end position="551"/>
    </location>
</feature>
<feature type="topological domain" description="Cytoplasmic" evidence="1">
    <location>
        <begin position="552"/>
        <end position="638"/>
    </location>
</feature>
<feature type="region of interest" description="Disordered" evidence="3">
    <location>
        <begin position="1"/>
        <end position="47"/>
    </location>
</feature>
<feature type="region of interest" description="Disordered" evidence="3">
    <location>
        <begin position="574"/>
        <end position="613"/>
    </location>
</feature>
<feature type="compositionally biased region" description="Basic and acidic residues" evidence="3">
    <location>
        <begin position="1"/>
        <end position="13"/>
    </location>
</feature>
<feature type="compositionally biased region" description="Pro residues" evidence="3">
    <location>
        <begin position="28"/>
        <end position="41"/>
    </location>
</feature>
<feature type="glycosylation site" description="N-linked (GlcNAc...) asparagine" evidence="2">
    <location>
        <position position="166"/>
    </location>
</feature>
<feature type="glycosylation site" description="N-linked (GlcNAc...) asparagine" evidence="2">
    <location>
        <position position="384"/>
    </location>
</feature>
<accession>O46547</accession>